<feature type="chain" id="PRO_1000187394" description="Enolase-phosphatase E1">
    <location>
        <begin position="1"/>
        <end position="225"/>
    </location>
</feature>
<dbReference type="EC" id="3.1.3.77" evidence="1"/>
<dbReference type="EMBL" id="CP000472">
    <property type="protein sequence ID" value="ACJ26967.1"/>
    <property type="molecule type" value="Genomic_DNA"/>
</dbReference>
<dbReference type="RefSeq" id="WP_020910351.1">
    <property type="nucleotide sequence ID" value="NC_011566.1"/>
</dbReference>
<dbReference type="SMR" id="B8CGX4"/>
<dbReference type="STRING" id="225849.swp_0123"/>
<dbReference type="KEGG" id="swp:swp_0123"/>
<dbReference type="eggNOG" id="COG4229">
    <property type="taxonomic scope" value="Bacteria"/>
</dbReference>
<dbReference type="HOGENOM" id="CLU_023273_0_0_6"/>
<dbReference type="OrthoDB" id="9797416at2"/>
<dbReference type="UniPathway" id="UPA00904">
    <property type="reaction ID" value="UER00876"/>
</dbReference>
<dbReference type="UniPathway" id="UPA00904">
    <property type="reaction ID" value="UER00877"/>
</dbReference>
<dbReference type="Proteomes" id="UP000000753">
    <property type="component" value="Chromosome"/>
</dbReference>
<dbReference type="GO" id="GO:0043715">
    <property type="term" value="F:2,3-diketo-5-methylthiopentyl-1-phosphate enolase activity"/>
    <property type="evidence" value="ECO:0007669"/>
    <property type="project" value="UniProtKB-UniRule"/>
</dbReference>
<dbReference type="GO" id="GO:0043716">
    <property type="term" value="F:2-hydroxy-3-keto-5-methylthiopentenyl-1-phosphate phosphatase activity"/>
    <property type="evidence" value="ECO:0007669"/>
    <property type="project" value="UniProtKB-UniRule"/>
</dbReference>
<dbReference type="GO" id="GO:0043874">
    <property type="term" value="F:acireductone synthase activity"/>
    <property type="evidence" value="ECO:0007669"/>
    <property type="project" value="UniProtKB-EC"/>
</dbReference>
<dbReference type="GO" id="GO:0000287">
    <property type="term" value="F:magnesium ion binding"/>
    <property type="evidence" value="ECO:0007669"/>
    <property type="project" value="UniProtKB-UniRule"/>
</dbReference>
<dbReference type="GO" id="GO:0019509">
    <property type="term" value="P:L-methionine salvage from methylthioadenosine"/>
    <property type="evidence" value="ECO:0007669"/>
    <property type="project" value="UniProtKB-UniRule"/>
</dbReference>
<dbReference type="CDD" id="cd01629">
    <property type="entry name" value="HAD_EP"/>
    <property type="match status" value="1"/>
</dbReference>
<dbReference type="FunFam" id="1.10.720.60:FF:000008">
    <property type="entry name" value="Enolase-phosphatase E1"/>
    <property type="match status" value="1"/>
</dbReference>
<dbReference type="Gene3D" id="1.10.720.60">
    <property type="match status" value="1"/>
</dbReference>
<dbReference type="Gene3D" id="3.40.50.1000">
    <property type="entry name" value="HAD superfamily/HAD-like"/>
    <property type="match status" value="1"/>
</dbReference>
<dbReference type="HAMAP" id="MF_01681">
    <property type="entry name" value="Salvage_MtnC"/>
    <property type="match status" value="1"/>
</dbReference>
<dbReference type="InterPro" id="IPR023943">
    <property type="entry name" value="Enolase-ppase_E1"/>
</dbReference>
<dbReference type="InterPro" id="IPR036412">
    <property type="entry name" value="HAD-like_sf"/>
</dbReference>
<dbReference type="InterPro" id="IPR006439">
    <property type="entry name" value="HAD-SF_hydro_IA"/>
</dbReference>
<dbReference type="InterPro" id="IPR023214">
    <property type="entry name" value="HAD_sf"/>
</dbReference>
<dbReference type="NCBIfam" id="TIGR01691">
    <property type="entry name" value="enolase-ppase"/>
    <property type="match status" value="1"/>
</dbReference>
<dbReference type="NCBIfam" id="TIGR01549">
    <property type="entry name" value="HAD-SF-IA-v1"/>
    <property type="match status" value="1"/>
</dbReference>
<dbReference type="PANTHER" id="PTHR20371">
    <property type="entry name" value="ENOLASE-PHOSPHATASE E1"/>
    <property type="match status" value="1"/>
</dbReference>
<dbReference type="PANTHER" id="PTHR20371:SF1">
    <property type="entry name" value="ENOLASE-PHOSPHATASE E1"/>
    <property type="match status" value="1"/>
</dbReference>
<dbReference type="Pfam" id="PF00702">
    <property type="entry name" value="Hydrolase"/>
    <property type="match status" value="1"/>
</dbReference>
<dbReference type="PRINTS" id="PR00413">
    <property type="entry name" value="HADHALOGNASE"/>
</dbReference>
<dbReference type="SFLD" id="SFLDF00044">
    <property type="entry name" value="enolase-phosphatase"/>
    <property type="match status" value="1"/>
</dbReference>
<dbReference type="SFLD" id="SFLDS00003">
    <property type="entry name" value="Haloacid_Dehalogenase"/>
    <property type="match status" value="1"/>
</dbReference>
<dbReference type="SUPFAM" id="SSF56784">
    <property type="entry name" value="HAD-like"/>
    <property type="match status" value="1"/>
</dbReference>
<keyword id="KW-0028">Amino-acid biosynthesis</keyword>
<keyword id="KW-0378">Hydrolase</keyword>
<keyword id="KW-0460">Magnesium</keyword>
<keyword id="KW-0479">Metal-binding</keyword>
<keyword id="KW-0486">Methionine biosynthesis</keyword>
<protein>
    <recommendedName>
        <fullName evidence="1">Enolase-phosphatase E1</fullName>
        <ecNumber evidence="1">3.1.3.77</ecNumber>
    </recommendedName>
    <alternativeName>
        <fullName evidence="1">2,3-diketo-5-methylthio-1-phosphopentane phosphatase</fullName>
    </alternativeName>
</protein>
<name>MTNC_SHEPW</name>
<sequence length="225" mass="25161">MGIRAIVVDTAGTTTDLNFIEDILFPYSAKVLPAFLEENQKNVLVENCICDVQDIALEPDADLARVTEILLQWIEEDRKATPLKTIQGLIWKQGYANGEFKGHIFPDFIEALDGYKQQGLRVYSFSSGSVDAQKLLFGNSDAGDLTDKFNGHFDTRTGNKRFKQAYCNILNTISLSPKQILFVSDVLEELKAASEAGLNVLQMVRQDNQRTGDFKQISSFAEIEL</sequence>
<comment type="function">
    <text evidence="1">Bifunctional enzyme that catalyzes the enolization of 2,3-diketo-5-methylthiopentyl-1-phosphate (DK-MTP-1-P) into the intermediate 2-hydroxy-3-keto-5-methylthiopentenyl-1-phosphate (HK-MTPenyl-1-P), which is then dephosphorylated to form the acireductone 1,2-dihydroxy-3-keto-5-methylthiopentene (DHK-MTPene).</text>
</comment>
<comment type="catalytic activity">
    <reaction evidence="1">
        <text>5-methylsulfanyl-2,3-dioxopentyl phosphate + H2O = 1,2-dihydroxy-5-(methylsulfanyl)pent-1-en-3-one + phosphate</text>
        <dbReference type="Rhea" id="RHEA:21700"/>
        <dbReference type="ChEBI" id="CHEBI:15377"/>
        <dbReference type="ChEBI" id="CHEBI:43474"/>
        <dbReference type="ChEBI" id="CHEBI:49252"/>
        <dbReference type="ChEBI" id="CHEBI:58828"/>
        <dbReference type="EC" id="3.1.3.77"/>
    </reaction>
</comment>
<comment type="cofactor">
    <cofactor evidence="1">
        <name>Mg(2+)</name>
        <dbReference type="ChEBI" id="CHEBI:18420"/>
    </cofactor>
    <text evidence="1">Binds 1 Mg(2+) ion per subunit.</text>
</comment>
<comment type="pathway">
    <text evidence="1">Amino-acid biosynthesis; L-methionine biosynthesis via salvage pathway; L-methionine from S-methyl-5-thio-alpha-D-ribose 1-phosphate: step 3/6.</text>
</comment>
<comment type="pathway">
    <text evidence="1">Amino-acid biosynthesis; L-methionine biosynthesis via salvage pathway; L-methionine from S-methyl-5-thio-alpha-D-ribose 1-phosphate: step 4/6.</text>
</comment>
<comment type="subunit">
    <text evidence="1">Monomer.</text>
</comment>
<comment type="similarity">
    <text evidence="1">Belongs to the HAD-like hydrolase superfamily. MasA/MtnC family.</text>
</comment>
<gene>
    <name evidence="1" type="primary">mtnC</name>
    <name type="ordered locus">swp_0123</name>
</gene>
<reference key="1">
    <citation type="journal article" date="2008" name="PLoS ONE">
        <title>Environmental adaptation: genomic analysis of the piezotolerant and psychrotolerant deep-sea iron reducing bacterium Shewanella piezotolerans WP3.</title>
        <authorList>
            <person name="Wang F."/>
            <person name="Wang J."/>
            <person name="Jian H."/>
            <person name="Zhang B."/>
            <person name="Li S."/>
            <person name="Wang F."/>
            <person name="Zeng X."/>
            <person name="Gao L."/>
            <person name="Bartlett D.H."/>
            <person name="Yu J."/>
            <person name="Hu S."/>
            <person name="Xiao X."/>
        </authorList>
    </citation>
    <scope>NUCLEOTIDE SEQUENCE [LARGE SCALE GENOMIC DNA]</scope>
    <source>
        <strain>WP3 / JCM 13877</strain>
    </source>
</reference>
<organism>
    <name type="scientific">Shewanella piezotolerans (strain WP3 / JCM 13877)</name>
    <dbReference type="NCBI Taxonomy" id="225849"/>
    <lineage>
        <taxon>Bacteria</taxon>
        <taxon>Pseudomonadati</taxon>
        <taxon>Pseudomonadota</taxon>
        <taxon>Gammaproteobacteria</taxon>
        <taxon>Alteromonadales</taxon>
        <taxon>Shewanellaceae</taxon>
        <taxon>Shewanella</taxon>
    </lineage>
</organism>
<proteinExistence type="inferred from homology"/>
<evidence type="ECO:0000255" key="1">
    <source>
        <dbReference type="HAMAP-Rule" id="MF_01681"/>
    </source>
</evidence>
<accession>B8CGX4</accession>